<feature type="chain" id="PRO_0000346127" description="Cell division protein ZapA">
    <location>
        <begin position="1"/>
        <end position="107"/>
    </location>
</feature>
<feature type="coiled-coil region" evidence="2">
    <location>
        <begin position="21"/>
        <end position="42"/>
    </location>
</feature>
<feature type="coiled-coil region" evidence="2">
    <location>
        <begin position="71"/>
        <end position="96"/>
    </location>
</feature>
<gene>
    <name type="primary">zapA</name>
    <name type="ordered locus">MS0477</name>
</gene>
<comment type="function">
    <text evidence="1">Activator of cell division through the inhibition of FtsZ GTPase activity, therefore promoting FtsZ assembly into bundles of protofilaments necessary for the formation of the division Z ring. It is recruited early at mid-cell but it is not essential for cell division (By similarity).</text>
</comment>
<comment type="subunit">
    <text evidence="1">Homodimer. Interacts with FtsZ (By similarity).</text>
</comment>
<comment type="subcellular location">
    <subcellularLocation>
        <location evidence="1">Cytoplasm</location>
    </subcellularLocation>
    <text evidence="1">Localizes at mid-cell.</text>
</comment>
<comment type="similarity">
    <text evidence="3">Belongs to the ZapA family. Type 1 subfamily.</text>
</comment>
<comment type="sequence caution" evidence="3">
    <conflict type="erroneous initiation">
        <sequence resource="EMBL-CDS" id="AAU37084"/>
    </conflict>
</comment>
<accession>Q65VC6</accession>
<organism>
    <name type="scientific">Mannheimia succiniciproducens (strain KCTC 0769BP / MBEL55E)</name>
    <dbReference type="NCBI Taxonomy" id="221988"/>
    <lineage>
        <taxon>Bacteria</taxon>
        <taxon>Pseudomonadati</taxon>
        <taxon>Pseudomonadota</taxon>
        <taxon>Gammaproteobacteria</taxon>
        <taxon>Pasteurellales</taxon>
        <taxon>Pasteurellaceae</taxon>
        <taxon>Basfia</taxon>
    </lineage>
</organism>
<dbReference type="EMBL" id="AE016827">
    <property type="protein sequence ID" value="AAU37084.1"/>
    <property type="status" value="ALT_INIT"/>
    <property type="molecule type" value="Genomic_DNA"/>
</dbReference>
<dbReference type="RefSeq" id="WP_041639538.1">
    <property type="nucleotide sequence ID" value="NC_006300.1"/>
</dbReference>
<dbReference type="SMR" id="Q65VC6"/>
<dbReference type="STRING" id="221988.MS0477"/>
<dbReference type="KEGG" id="msu:MS0477"/>
<dbReference type="eggNOG" id="COG3027">
    <property type="taxonomic scope" value="Bacteria"/>
</dbReference>
<dbReference type="HOGENOM" id="CLU_116623_3_0_6"/>
<dbReference type="OrthoDB" id="5917174at2"/>
<dbReference type="Proteomes" id="UP000000607">
    <property type="component" value="Chromosome"/>
</dbReference>
<dbReference type="GO" id="GO:0032153">
    <property type="term" value="C:cell division site"/>
    <property type="evidence" value="ECO:0007669"/>
    <property type="project" value="TreeGrafter"/>
</dbReference>
<dbReference type="GO" id="GO:0030428">
    <property type="term" value="C:cell septum"/>
    <property type="evidence" value="ECO:0007669"/>
    <property type="project" value="TreeGrafter"/>
</dbReference>
<dbReference type="GO" id="GO:0005829">
    <property type="term" value="C:cytosol"/>
    <property type="evidence" value="ECO:0007669"/>
    <property type="project" value="TreeGrafter"/>
</dbReference>
<dbReference type="GO" id="GO:0000917">
    <property type="term" value="P:division septum assembly"/>
    <property type="evidence" value="ECO:0007669"/>
    <property type="project" value="UniProtKB-KW"/>
</dbReference>
<dbReference type="GO" id="GO:0043093">
    <property type="term" value="P:FtsZ-dependent cytokinesis"/>
    <property type="evidence" value="ECO:0007669"/>
    <property type="project" value="TreeGrafter"/>
</dbReference>
<dbReference type="GO" id="GO:0000921">
    <property type="term" value="P:septin ring assembly"/>
    <property type="evidence" value="ECO:0007669"/>
    <property type="project" value="TreeGrafter"/>
</dbReference>
<dbReference type="Gene3D" id="3.30.160.880">
    <property type="entry name" value="Cell division protein ZapA protomer, N-terminal domain"/>
    <property type="match status" value="1"/>
</dbReference>
<dbReference type="InterPro" id="IPR007838">
    <property type="entry name" value="Cell_div_ZapA-like"/>
</dbReference>
<dbReference type="InterPro" id="IPR036192">
    <property type="entry name" value="Cell_div_ZapA-like_sf"/>
</dbReference>
<dbReference type="InterPro" id="IPR042233">
    <property type="entry name" value="Cell_div_ZapA_N"/>
</dbReference>
<dbReference type="PANTHER" id="PTHR34981">
    <property type="entry name" value="CELL DIVISION PROTEIN ZAPA"/>
    <property type="match status" value="1"/>
</dbReference>
<dbReference type="PANTHER" id="PTHR34981:SF1">
    <property type="entry name" value="CELL DIVISION PROTEIN ZAPA"/>
    <property type="match status" value="1"/>
</dbReference>
<dbReference type="Pfam" id="PF05164">
    <property type="entry name" value="ZapA"/>
    <property type="match status" value="1"/>
</dbReference>
<dbReference type="SUPFAM" id="SSF102829">
    <property type="entry name" value="Cell division protein ZapA-like"/>
    <property type="match status" value="1"/>
</dbReference>
<protein>
    <recommendedName>
        <fullName>Cell division protein ZapA</fullName>
    </recommendedName>
    <alternativeName>
        <fullName>Z ring-associated protein ZapA</fullName>
    </alternativeName>
</protein>
<keyword id="KW-0131">Cell cycle</keyword>
<keyword id="KW-0132">Cell division</keyword>
<keyword id="KW-0175">Coiled coil</keyword>
<keyword id="KW-0963">Cytoplasm</keyword>
<keyword id="KW-0717">Septation</keyword>
<proteinExistence type="inferred from homology"/>
<name>ZAPA_MANSM</name>
<reference key="1">
    <citation type="journal article" date="2004" name="Nat. Biotechnol.">
        <title>The genome sequence of the capnophilic rumen bacterium Mannheimia succiniciproducens.</title>
        <authorList>
            <person name="Hong S.H."/>
            <person name="Kim J.S."/>
            <person name="Lee S.Y."/>
            <person name="In Y.H."/>
            <person name="Choi S.S."/>
            <person name="Rih J.-K."/>
            <person name="Kim C.H."/>
            <person name="Jeong H."/>
            <person name="Hur C.G."/>
            <person name="Kim J.J."/>
        </authorList>
    </citation>
    <scope>NUCLEOTIDE SEQUENCE [LARGE SCALE GENOMIC DNA]</scope>
    <source>
        <strain>KCTC 0769BP / MBEL55E</strain>
    </source>
</reference>
<evidence type="ECO:0000250" key="1"/>
<evidence type="ECO:0000255" key="2"/>
<evidence type="ECO:0000305" key="3"/>
<sequence>MSSKTIELNFLGQVLRLNCPEEQHDSLREAAKLLDSRVTEMKDRTGILQVEKALAIVALNLSFELLQEQHKTHKTENVLQNQIEQLTRSLESISASTPTQQASYSID</sequence>